<name>SPEH2_BACCR</name>
<keyword id="KW-0068">Autocatalytic cleavage</keyword>
<keyword id="KW-0210">Decarboxylase</keyword>
<keyword id="KW-0456">Lyase</keyword>
<keyword id="KW-0620">Polyamine biosynthesis</keyword>
<keyword id="KW-0670">Pyruvate</keyword>
<keyword id="KW-1185">Reference proteome</keyword>
<keyword id="KW-0949">S-adenosyl-L-methionine</keyword>
<keyword id="KW-0704">Schiff base</keyword>
<keyword id="KW-0745">Spermidine biosynthesis</keyword>
<keyword id="KW-0865">Zymogen</keyword>
<reference key="1">
    <citation type="journal article" date="2003" name="Nature">
        <title>Genome sequence of Bacillus cereus and comparative analysis with Bacillus anthracis.</title>
        <authorList>
            <person name="Ivanova N."/>
            <person name="Sorokin A."/>
            <person name="Anderson I."/>
            <person name="Galleron N."/>
            <person name="Candelon B."/>
            <person name="Kapatral V."/>
            <person name="Bhattacharyya A."/>
            <person name="Reznik G."/>
            <person name="Mikhailova N."/>
            <person name="Lapidus A."/>
            <person name="Chu L."/>
            <person name="Mazur M."/>
            <person name="Goltsman E."/>
            <person name="Larsen N."/>
            <person name="D'Souza M."/>
            <person name="Walunas T."/>
            <person name="Grechkin Y."/>
            <person name="Pusch G."/>
            <person name="Haselkorn R."/>
            <person name="Fonstein M."/>
            <person name="Ehrlich S.D."/>
            <person name="Overbeek R."/>
            <person name="Kyrpides N.C."/>
        </authorList>
    </citation>
    <scope>NUCLEOTIDE SEQUENCE [LARGE SCALE GENOMIC DNA]</scope>
    <source>
        <strain>ATCC 14579 / DSM 31 / CCUG 7414 / JCM 2152 / NBRC 15305 / NCIMB 9373 / NCTC 2599 / NRRL B-3711</strain>
    </source>
</reference>
<proteinExistence type="inferred from homology"/>
<protein>
    <recommendedName>
        <fullName evidence="2">S-adenosylmethionine decarboxylase proenzyme 2</fullName>
        <shortName evidence="2">AdoMetDC 2</shortName>
        <shortName evidence="2">SAMDC 2</shortName>
        <ecNumber evidence="2">4.1.1.50</ecNumber>
    </recommendedName>
    <component>
        <recommendedName>
            <fullName>S-adenosylmethionine decarboxylase 2 beta chain</fullName>
        </recommendedName>
    </component>
    <component>
        <recommendedName>
            <fullName>S-adenosylmethionine decarboxylase 2 alpha chain</fullName>
        </recommendedName>
    </component>
</protein>
<sequence length="123" mass="13942">MEYSTFGKHIIVDLWGVDFSLLDDMHFLEYHLVTAADYSGAHVLNVSKKEFQPYGVTVLVLLSESHLSIHTYPEQNFAAIDCYTCGTTVEPQIAIDYIVNILKPERMHIKRLIRGIGEIVTAD</sequence>
<dbReference type="EC" id="4.1.1.50" evidence="2"/>
<dbReference type="EMBL" id="AE016877">
    <property type="protein sequence ID" value="AAP12078.1"/>
    <property type="molecule type" value="Genomic_DNA"/>
</dbReference>
<dbReference type="RefSeq" id="NP_834877.1">
    <property type="nucleotide sequence ID" value="NC_004722.1"/>
</dbReference>
<dbReference type="SMR" id="Q815E7"/>
<dbReference type="STRING" id="226900.BC_5214"/>
<dbReference type="KEGG" id="bce:BC5214"/>
<dbReference type="PATRIC" id="fig|226900.8.peg.5378"/>
<dbReference type="HOGENOM" id="CLU_125470_2_3_9"/>
<dbReference type="OrthoDB" id="9793120at2"/>
<dbReference type="UniPathway" id="UPA00331">
    <property type="reaction ID" value="UER00451"/>
</dbReference>
<dbReference type="Proteomes" id="UP000001417">
    <property type="component" value="Chromosome"/>
</dbReference>
<dbReference type="GO" id="GO:0005829">
    <property type="term" value="C:cytosol"/>
    <property type="evidence" value="ECO:0000318"/>
    <property type="project" value="GO_Central"/>
</dbReference>
<dbReference type="GO" id="GO:0004014">
    <property type="term" value="F:adenosylmethionine decarboxylase activity"/>
    <property type="evidence" value="ECO:0000318"/>
    <property type="project" value="GO_Central"/>
</dbReference>
<dbReference type="GO" id="GO:0008295">
    <property type="term" value="P:spermidine biosynthetic process"/>
    <property type="evidence" value="ECO:0000318"/>
    <property type="project" value="GO_Central"/>
</dbReference>
<dbReference type="FunFam" id="3.30.160.750:FF:000002">
    <property type="entry name" value="S-adenosylmethionine decarboxylase proenzyme"/>
    <property type="match status" value="1"/>
</dbReference>
<dbReference type="FunFam" id="3.30.360.110:FF:000001">
    <property type="entry name" value="S-adenosylmethionine decarboxylase proenzyme"/>
    <property type="match status" value="1"/>
</dbReference>
<dbReference type="Gene3D" id="3.30.160.750">
    <property type="match status" value="1"/>
</dbReference>
<dbReference type="Gene3D" id="3.30.360.110">
    <property type="entry name" value="S-adenosylmethionine decarboxylase domain"/>
    <property type="match status" value="1"/>
</dbReference>
<dbReference type="HAMAP" id="MF_00464">
    <property type="entry name" value="AdoMetDC_1"/>
    <property type="match status" value="1"/>
</dbReference>
<dbReference type="InterPro" id="IPR042286">
    <property type="entry name" value="AdoMetDC_C"/>
</dbReference>
<dbReference type="InterPro" id="IPR003826">
    <property type="entry name" value="AdoMetDC_fam_prok"/>
</dbReference>
<dbReference type="InterPro" id="IPR042284">
    <property type="entry name" value="AdoMetDC_N"/>
</dbReference>
<dbReference type="InterPro" id="IPR016067">
    <property type="entry name" value="S-AdoMet_deCO2ase_core"/>
</dbReference>
<dbReference type="InterPro" id="IPR017716">
    <property type="entry name" value="S-AdoMet_deCOase_pro-enz"/>
</dbReference>
<dbReference type="NCBIfam" id="TIGR03330">
    <property type="entry name" value="SAM_DCase_Bsu"/>
    <property type="match status" value="1"/>
</dbReference>
<dbReference type="PANTHER" id="PTHR33866">
    <property type="entry name" value="S-ADENOSYLMETHIONINE DECARBOXYLASE PROENZYME"/>
    <property type="match status" value="1"/>
</dbReference>
<dbReference type="PANTHER" id="PTHR33866:SF2">
    <property type="entry name" value="S-ADENOSYLMETHIONINE DECARBOXYLASE PROENZYME"/>
    <property type="match status" value="1"/>
</dbReference>
<dbReference type="Pfam" id="PF02675">
    <property type="entry name" value="AdoMet_dc"/>
    <property type="match status" value="1"/>
</dbReference>
<dbReference type="SUPFAM" id="SSF56276">
    <property type="entry name" value="S-adenosylmethionine decarboxylase"/>
    <property type="match status" value="1"/>
</dbReference>
<organism>
    <name type="scientific">Bacillus cereus (strain ATCC 14579 / DSM 31 / CCUG 7414 / JCM 2152 / NBRC 15305 / NCIMB 9373 / NCTC 2599 / NRRL B-3711)</name>
    <dbReference type="NCBI Taxonomy" id="226900"/>
    <lineage>
        <taxon>Bacteria</taxon>
        <taxon>Bacillati</taxon>
        <taxon>Bacillota</taxon>
        <taxon>Bacilli</taxon>
        <taxon>Bacillales</taxon>
        <taxon>Bacillaceae</taxon>
        <taxon>Bacillus</taxon>
        <taxon>Bacillus cereus group</taxon>
    </lineage>
</organism>
<feature type="chain" id="PRO_0000030089" description="S-adenosylmethionine decarboxylase 2 beta chain" evidence="1">
    <location>
        <begin position="1"/>
        <end position="64"/>
    </location>
</feature>
<feature type="chain" id="PRO_0000030090" description="S-adenosylmethionine decarboxylase 2 alpha chain" evidence="1">
    <location>
        <begin position="65"/>
        <end position="123"/>
    </location>
</feature>
<feature type="active site" description="Schiff-base intermediate with substrate; via pyruvic acid" evidence="2">
    <location>
        <position position="65"/>
    </location>
</feature>
<feature type="active site" description="Proton acceptor; for processing activity" evidence="2">
    <location>
        <position position="70"/>
    </location>
</feature>
<feature type="active site" description="Proton donor; for catalytic activity" evidence="2">
    <location>
        <position position="85"/>
    </location>
</feature>
<feature type="site" description="Cleavage (non-hydrolytic); by autolysis" evidence="2">
    <location>
        <begin position="64"/>
        <end position="65"/>
    </location>
</feature>
<feature type="modified residue" description="Pyruvic acid (Ser); by autocatalysis" evidence="2">
    <location>
        <position position="65"/>
    </location>
</feature>
<gene>
    <name evidence="2" type="primary">speH2</name>
    <name type="ordered locus">BC_5214</name>
</gene>
<accession>Q815E7</accession>
<evidence type="ECO:0000250" key="1"/>
<evidence type="ECO:0000255" key="2">
    <source>
        <dbReference type="HAMAP-Rule" id="MF_00464"/>
    </source>
</evidence>
<comment type="function">
    <text evidence="2">Catalyzes the decarboxylation of S-adenosylmethionine to S-adenosylmethioninamine (dcAdoMet), the propylamine donor required for the synthesis of the polyamines spermine and spermidine from the diamine putrescine.</text>
</comment>
<comment type="catalytic activity">
    <reaction evidence="2">
        <text>S-adenosyl-L-methionine + H(+) = S-adenosyl 3-(methylsulfanyl)propylamine + CO2</text>
        <dbReference type="Rhea" id="RHEA:15981"/>
        <dbReference type="ChEBI" id="CHEBI:15378"/>
        <dbReference type="ChEBI" id="CHEBI:16526"/>
        <dbReference type="ChEBI" id="CHEBI:57443"/>
        <dbReference type="ChEBI" id="CHEBI:59789"/>
        <dbReference type="EC" id="4.1.1.50"/>
    </reaction>
</comment>
<comment type="cofactor">
    <cofactor evidence="2">
        <name>pyruvate</name>
        <dbReference type="ChEBI" id="CHEBI:15361"/>
    </cofactor>
    <text evidence="2">Binds 1 pyruvoyl group covalently per subunit.</text>
</comment>
<comment type="pathway">
    <text evidence="2">Amine and polyamine biosynthesis; S-adenosylmethioninamine biosynthesis; S-adenosylmethioninamine from S-adenosyl-L-methionine: step 1/1.</text>
</comment>
<comment type="subunit">
    <text evidence="2">Heterotetramer of two alpha and two beta chains arranged as a dimer of alpha/beta heterodimers.</text>
</comment>
<comment type="PTM">
    <text evidence="2">Is synthesized initially as an inactive proenzyme. Formation of the active enzyme involves a self-maturation process in which the active site pyruvoyl group is generated from an internal serine residue via an autocatalytic post-translational modification. Two non-identical subunits are generated from the proenzyme in this reaction, and the pyruvate is formed at the N-terminus of the alpha chain, which is derived from the carboxyl end of the proenzyme. The post-translation cleavage follows an unusual pathway, termed non-hydrolytic serinolysis, in which the side chain hydroxyl group of the serine supplies its oxygen atom to form the C-terminus of the beta chain, while the remainder of the serine residue undergoes an oxidative deamination to produce ammonia and the pyruvoyl group blocking the N-terminus of the alpha chain.</text>
</comment>
<comment type="similarity">
    <text evidence="2">Belongs to the prokaryotic AdoMetDC family. Type 1 subfamily.</text>
</comment>